<evidence type="ECO:0000250" key="1"/>
<evidence type="ECO:0000250" key="2">
    <source>
        <dbReference type="UniProtKB" id="P23141"/>
    </source>
</evidence>
<evidence type="ECO:0000250" key="3">
    <source>
        <dbReference type="UniProtKB" id="Q8VCT4"/>
    </source>
</evidence>
<evidence type="ECO:0000255" key="4"/>
<evidence type="ECO:0000255" key="5">
    <source>
        <dbReference type="PROSITE-ProRule" id="PRU10039"/>
    </source>
</evidence>
<evidence type="ECO:0000269" key="6">
    <source>
    </source>
</evidence>
<evidence type="ECO:0000269" key="7">
    <source>
    </source>
</evidence>
<evidence type="ECO:0000269" key="8">
    <source>
    </source>
</evidence>
<evidence type="ECO:0000269" key="9">
    <source>
    </source>
</evidence>
<evidence type="ECO:0000303" key="10">
    <source>
    </source>
</evidence>
<evidence type="ECO:0000305" key="11"/>
<evidence type="ECO:0000305" key="12">
    <source>
    </source>
</evidence>
<evidence type="ECO:0000312" key="13">
    <source>
        <dbReference type="RGD" id="70896"/>
    </source>
</evidence>
<feature type="signal peptide" evidence="8 9">
    <location>
        <begin position="1"/>
        <end position="18"/>
    </location>
</feature>
<feature type="chain" id="PRO_0000008584" description="Carboxylesterase 1D">
    <location>
        <begin position="19"/>
        <end position="565"/>
    </location>
</feature>
<feature type="short sequence motif" description="Prevents secretion from ER" evidence="4">
    <location>
        <begin position="562"/>
        <end position="565"/>
    </location>
</feature>
<feature type="active site" description="Acyl-ester intermediate" evidence="5">
    <location>
        <position position="221"/>
    </location>
</feature>
<feature type="active site" description="Charge relay system" evidence="2">
    <location>
        <position position="353"/>
    </location>
</feature>
<feature type="active site" description="Charge relay system" evidence="2">
    <location>
        <position position="466"/>
    </location>
</feature>
<feature type="modified residue" description="N6-succinyllysine" evidence="3">
    <location>
        <position position="382"/>
    </location>
</feature>
<feature type="glycosylation site" description="N-linked (GlcNAc...) asparagine" evidence="1">
    <location>
        <position position="79"/>
    </location>
</feature>
<feature type="glycosylation site" description="N-linked (GlcNAc...) asparagine" evidence="4">
    <location>
        <position position="489"/>
    </location>
</feature>
<feature type="disulfide bond" evidence="2">
    <location>
        <begin position="87"/>
        <end position="116"/>
    </location>
</feature>
<feature type="disulfide bond" evidence="2">
    <location>
        <begin position="273"/>
        <end position="284"/>
    </location>
</feature>
<feature type="mutagenesis site" description="No effect on the hydrolysis of PNPC or PNPA, no activity on cholesteryl oleate. No effect on the hydrolysis of PNPC or PNPA, no activity on cholesteryl oleate; when associated with E-492; or with T-491 and E-492. Increases activity on PNPC compared to activity on PNPA; when associated with I-423; T-491 and E-492." evidence="6">
    <original>Q</original>
    <variation>R</variation>
    <location>
        <position position="186"/>
    </location>
</feature>
<feature type="mutagenesis site" description="Increases specific activity against PNPC by 8-fold, does not increase activity against PNPA, no activity on cholesteryl oleate. Increases activity on PNPC compared to activity on PNPA; when associated with R-186; T-491 and E-492. Increases specific activity against PNPC by 7.5-fold and against PNPA by 3.6-fold, and increases cholesteryl esterase activity by 2.7 fold; when associated with S-506." evidence="6">
    <original>M</original>
    <variation>I</variation>
    <location>
        <position position="423"/>
    </location>
</feature>
<feature type="mutagenesis site" description="No effect on the hydrolysis of PNPC or PNPA, no activity on cholesteryl oleate; when associated with R-186 and E-492. Increases activity on PNPC compared to activity on PNPA; when associated with R-186; I-423 and E-492." evidence="6">
    <original>S</original>
    <variation>T</variation>
    <location>
        <position position="491"/>
    </location>
</feature>
<feature type="mutagenesis site" description="No effect on the hydrolysis of PNPC or PNPA, no activity on cholesteryl oleate; when associated with R-186; or with R-186 and T-491. Increases activity on PNPC compared to activity on PNPA; when associated with R-186; I-423 and T-491." evidence="6">
    <original>K</original>
    <variation>E</variation>
    <location>
        <position position="492"/>
    </location>
</feature>
<feature type="mutagenesis site" description="Increases specific activity against PNPC by 6-fold and against PNPA by 8.7-fold, no activity on cholesteryl oleate. Increases specific activity against PNPC by 7.5-fold and against PNPA by 3.6-fold, and increases cholesteryl esterase activity by 2.7 fold; when associated with I-423." evidence="6">
    <original>N</original>
    <variation>S</variation>
    <location>
        <position position="506"/>
    </location>
</feature>
<feature type="sequence conflict" description="In Ref. 1; CAA36236, 3; AAA88507 and 5; AAD49369." evidence="11" ref="1 3 5">
    <original>Q</original>
    <variation>R</variation>
    <location>
        <position position="186"/>
    </location>
</feature>
<feature type="sequence conflict" description="In Ref. 1; CAA36236." evidence="11" ref="1">
    <original>N</original>
    <variation>K</variation>
    <location>
        <position position="265"/>
    </location>
</feature>
<feature type="sequence conflict" description="In Ref. 3; AAA88507." evidence="11" ref="3">
    <original>A</original>
    <variation>E</variation>
    <location>
        <position position="420"/>
    </location>
</feature>
<feature type="sequence conflict" description="In Ref. 1; CAA36236, 3; AAA88507 and 5; AAD49369." evidence="11" ref="1 3 5">
    <original>M</original>
    <variation>I</variation>
    <location>
        <position position="423"/>
    </location>
</feature>
<feature type="sequence conflict" description="In Ref. 4; AAL00849." evidence="11" ref="4">
    <original>M</original>
    <variation>T</variation>
    <location>
        <position position="444"/>
    </location>
</feature>
<feature type="sequence conflict" description="In Ref. 3; AAA88507." evidence="11" ref="3">
    <original>SK</original>
    <variation>TQ</variation>
    <location>
        <begin position="491"/>
        <end position="492"/>
    </location>
</feature>
<feature type="sequence conflict" description="In Ref. 1; CAA36236, 3; AAA88507 and 5; AAD49369." evidence="11" ref="1 3 5">
    <original>N</original>
    <variation>S</variation>
    <location>
        <position position="506"/>
    </location>
</feature>
<name>EST1D_RAT</name>
<organism>
    <name type="scientific">Rattus norvegicus</name>
    <name type="common">Rat</name>
    <dbReference type="NCBI Taxonomy" id="10116"/>
    <lineage>
        <taxon>Eukaryota</taxon>
        <taxon>Metazoa</taxon>
        <taxon>Chordata</taxon>
        <taxon>Craniata</taxon>
        <taxon>Vertebrata</taxon>
        <taxon>Euteleostomi</taxon>
        <taxon>Mammalia</taxon>
        <taxon>Eutheria</taxon>
        <taxon>Euarchontoglires</taxon>
        <taxon>Glires</taxon>
        <taxon>Rodentia</taxon>
        <taxon>Myomorpha</taxon>
        <taxon>Muroidea</taxon>
        <taxon>Muridae</taxon>
        <taxon>Murinae</taxon>
        <taxon>Rattus</taxon>
    </lineage>
</organism>
<sequence length="565" mass="62147">MRLYPLVWLFLAACTAWGYPSSPPVVNTVKGKVLGKYVNLEGFAQPVAVFLGIPFAKPPLGSLRFAPPQPAEPWNFVKNTTSYPPMCSQDAVGGQVLSELFTNRKENIPLQFSEDCLYLNVYTPADLTKNSRLPVMVWIHGGGLVVGGASTYDGQVLSAHENVVVVTIQYRLGIWGFFSTGDEHSQGNWGHLDQVAALHWVQDNIANFGGNPGSVTIFGESAGGFSVSALVLSPLAKNLFHRAISESGVVLTSALITTDSKPIANLIATLSGCKTTTSAVMVHCLRQKTEDELLETSLKLNLFKLDLLGNPKESYPFLPTVIDGVVLPKTPEEILAEKSFNTVPYIVGINKQEFGWIIPTLMGYPLSEGKLDQKTAKSLLWKSYPTLKISEKMIPVVAEKYFGGTDDPAKRKDLFQDLVADVMFGVPSVMVSRSHRDAGAPTFMYEFEYRPSFVSAMRPKTVIGDHGDELFSVFGSPFLKDGASEEETNLSKMVMKYWANFARNGNPNGGGLPHWPEYDQKEGYLKIGASTQAAQRLKDKEVAFWSELRAKEAAEEPSHWKHVEL</sequence>
<accession>P16303</accession>
<accession>Q64574</accession>
<accession>Q6P785</accession>
<accession>Q91YG2</accession>
<accession>Q9QUX7</accession>
<accession>Q9R135</accession>
<proteinExistence type="evidence at protein level"/>
<gene>
    <name evidence="13" type="primary">Ces1d</name>
    <name type="synonym">Ces3</name>
</gene>
<keyword id="KW-0963">Cytoplasm</keyword>
<keyword id="KW-0903">Direct protein sequencing</keyword>
<keyword id="KW-1015">Disulfide bond</keyword>
<keyword id="KW-0256">Endoplasmic reticulum</keyword>
<keyword id="KW-0325">Glycoprotein</keyword>
<keyword id="KW-0378">Hydrolase</keyword>
<keyword id="KW-0442">Lipid degradation</keyword>
<keyword id="KW-0551">Lipid droplet</keyword>
<keyword id="KW-0443">Lipid metabolism</keyword>
<keyword id="KW-0492">Microsome</keyword>
<keyword id="KW-1185">Reference proteome</keyword>
<keyword id="KW-0719">Serine esterase</keyword>
<keyword id="KW-0732">Signal</keyword>
<comment type="function">
    <text evidence="3 7 8">Major lipase in white adipose tissue (By similarity). Involved in the metabolism of xenobiotics and of natural substrates. Hydrolyzes triacylglycerols and monoacylglycerols, with a preference for monoacylglycerols. The susceptibility of the substrate increases with decreasing acyl chain length of the fatty acid moiety. Catalyzes the synthesis of fatty acid ethyl esters (PubMed:1429692). Hydrolyzes retinyl esters (PubMed:12230550).</text>
</comment>
<comment type="catalytic activity">
    <reaction evidence="7">
        <text>all-trans-retinyl hexadecanoate + H2O = all-trans-retinol + hexadecanoate + H(+)</text>
        <dbReference type="Rhea" id="RHEA:13933"/>
        <dbReference type="ChEBI" id="CHEBI:7896"/>
        <dbReference type="ChEBI" id="CHEBI:15377"/>
        <dbReference type="ChEBI" id="CHEBI:15378"/>
        <dbReference type="ChEBI" id="CHEBI:17336"/>
        <dbReference type="ChEBI" id="CHEBI:17616"/>
    </reaction>
    <physiologicalReaction direction="left-to-right" evidence="12">
        <dbReference type="Rhea" id="RHEA:13934"/>
    </physiologicalReaction>
</comment>
<comment type="catalytic activity">
    <reaction evidence="5 8">
        <text>a carboxylic ester + H2O = an alcohol + a carboxylate + H(+)</text>
        <dbReference type="Rhea" id="RHEA:21164"/>
        <dbReference type="ChEBI" id="CHEBI:15377"/>
        <dbReference type="ChEBI" id="CHEBI:15378"/>
        <dbReference type="ChEBI" id="CHEBI:29067"/>
        <dbReference type="ChEBI" id="CHEBI:30879"/>
        <dbReference type="ChEBI" id="CHEBI:33308"/>
        <dbReference type="EC" id="3.1.1.1"/>
    </reaction>
</comment>
<comment type="catalytic activity">
    <reaction evidence="8">
        <text>a long-chain fatty acyl ethyl ester + H2O = a long-chain fatty acid + ethanol + H(+)</text>
        <dbReference type="Rhea" id="RHEA:16641"/>
        <dbReference type="ChEBI" id="CHEBI:13209"/>
        <dbReference type="ChEBI" id="CHEBI:15377"/>
        <dbReference type="ChEBI" id="CHEBI:15378"/>
        <dbReference type="ChEBI" id="CHEBI:16236"/>
        <dbReference type="ChEBI" id="CHEBI:57560"/>
        <dbReference type="EC" id="3.1.1.67"/>
    </reaction>
</comment>
<comment type="activity regulation">
    <text evidence="8">FAEE-synthesizing and PNPB-hydrolyzing activities are both inhibited by DFP.</text>
</comment>
<comment type="biophysicochemical properties">
    <kinetics>
        <KM evidence="8">0.71 M for oleic acid</KM>
        <KM evidence="7">1.16 uM for retinyl palmitate</KM>
        <Vmax evidence="8">1482.0 nmol/h/mg enzyme toward oleic acid</Vmax>
        <text evidence="7">kcat is 0.22 min(-1) with retinyl palmitate as substrate.</text>
    </kinetics>
    <phDependence>
        <text evidence="8">Optimum pH for FAEE synthesis is 7.0. Optimum pH for PNPB-hydrolyzing activity is 6-8.</text>
    </phDependence>
</comment>
<comment type="subunit">
    <text evidence="9">Homotrimer.</text>
</comment>
<comment type="subcellular location">
    <subcellularLocation>
        <location evidence="3">Endoplasmic reticulum lumen</location>
    </subcellularLocation>
    <subcellularLocation>
        <location evidence="3">Cytoplasm</location>
        <location evidence="3">Cytosol</location>
    </subcellularLocation>
    <subcellularLocation>
        <location evidence="3">Lipid droplet</location>
    </subcellularLocation>
    <subcellularLocation>
        <location evidence="7">Microsome</location>
    </subcellularLocation>
</comment>
<comment type="tissue specificity">
    <text evidence="7 8">Detected in liver, lung and testis, but not in kidney (at protein level).</text>
</comment>
<comment type="similarity">
    <text evidence="11">Belongs to the type-B carboxylesterase/lipase family.</text>
</comment>
<dbReference type="EC" id="3.1.1.1"/>
<dbReference type="EC" id="3.1.1.67"/>
<dbReference type="EMBL" id="X51974">
    <property type="protein sequence ID" value="CAA36236.1"/>
    <property type="molecule type" value="mRNA"/>
</dbReference>
<dbReference type="EMBL" id="X65296">
    <property type="protein sequence ID" value="CAA46391.1"/>
    <property type="molecule type" value="mRNA"/>
</dbReference>
<dbReference type="EMBL" id="L46791">
    <property type="protein sequence ID" value="AAA88507.1"/>
    <property type="molecule type" value="mRNA"/>
</dbReference>
<dbReference type="EMBL" id="L81144">
    <property type="protein sequence ID" value="AAL00849.1"/>
    <property type="molecule type" value="mRNA"/>
</dbReference>
<dbReference type="EMBL" id="AF171640">
    <property type="protein sequence ID" value="AAD49369.1"/>
    <property type="molecule type" value="mRNA"/>
</dbReference>
<dbReference type="EMBL" id="BC061789">
    <property type="protein sequence ID" value="AAH61789.1"/>
    <property type="molecule type" value="mRNA"/>
</dbReference>
<dbReference type="PIR" id="A45140">
    <property type="entry name" value="A45140"/>
</dbReference>
<dbReference type="PIR" id="S10367">
    <property type="entry name" value="S10367"/>
</dbReference>
<dbReference type="RefSeq" id="NP_579829.3">
    <property type="nucleotide sequence ID" value="NM_133295.3"/>
</dbReference>
<dbReference type="SMR" id="P16303"/>
<dbReference type="FunCoup" id="P16303">
    <property type="interactions" value="106"/>
</dbReference>
<dbReference type="STRING" id="10116.ENSRNOP00000021812"/>
<dbReference type="SwissLipids" id="SLP:000001457"/>
<dbReference type="ESTHER" id="ratno-Ces1d">
    <property type="family name" value="Carb_B_Chordata"/>
</dbReference>
<dbReference type="CarbonylDB" id="P16303"/>
<dbReference type="GlyCosmos" id="P16303">
    <property type="glycosylation" value="2 sites, No reported glycans"/>
</dbReference>
<dbReference type="GlyGen" id="P16303">
    <property type="glycosylation" value="2 sites"/>
</dbReference>
<dbReference type="iPTMnet" id="P16303"/>
<dbReference type="PhosphoSitePlus" id="P16303"/>
<dbReference type="PaxDb" id="10116-ENSRNOP00000021812"/>
<dbReference type="GeneID" id="113902"/>
<dbReference type="KEGG" id="rno:113902"/>
<dbReference type="AGR" id="RGD:1359640"/>
<dbReference type="AGR" id="RGD:70896"/>
<dbReference type="CTD" id="104158"/>
<dbReference type="RGD" id="70896">
    <property type="gene designation" value="Ces1d"/>
</dbReference>
<dbReference type="eggNOG" id="KOG1516">
    <property type="taxonomic scope" value="Eukaryota"/>
</dbReference>
<dbReference type="InParanoid" id="P16303"/>
<dbReference type="OrthoDB" id="3200163at2759"/>
<dbReference type="PhylomeDB" id="P16303"/>
<dbReference type="BRENDA" id="3.1.1.1">
    <property type="organism ID" value="5301"/>
</dbReference>
<dbReference type="Reactome" id="R-RNO-2022377">
    <property type="pathway name" value="Metabolism of Angiotensinogen to Angiotensins"/>
</dbReference>
<dbReference type="Reactome" id="R-RNO-211945">
    <property type="pathway name" value="Phase I - Functionalization of compounds"/>
</dbReference>
<dbReference type="Reactome" id="R-RNO-5578768">
    <property type="pathway name" value="Physiological factors"/>
</dbReference>
<dbReference type="Reactome" id="R-RNO-9749641">
    <property type="pathway name" value="Aspirin ADME"/>
</dbReference>
<dbReference type="SABIO-RK" id="P16303"/>
<dbReference type="PRO" id="PR:P16303"/>
<dbReference type="Proteomes" id="UP000002494">
    <property type="component" value="Unplaced"/>
</dbReference>
<dbReference type="GO" id="GO:0005737">
    <property type="term" value="C:cytoplasm"/>
    <property type="evidence" value="ECO:0000266"/>
    <property type="project" value="RGD"/>
</dbReference>
<dbReference type="GO" id="GO:0005829">
    <property type="term" value="C:cytosol"/>
    <property type="evidence" value="ECO:0000250"/>
    <property type="project" value="UniProtKB"/>
</dbReference>
<dbReference type="GO" id="GO:0005783">
    <property type="term" value="C:endoplasmic reticulum"/>
    <property type="evidence" value="ECO:0000266"/>
    <property type="project" value="RGD"/>
</dbReference>
<dbReference type="GO" id="GO:0005788">
    <property type="term" value="C:endoplasmic reticulum lumen"/>
    <property type="evidence" value="ECO:0000250"/>
    <property type="project" value="UniProtKB"/>
</dbReference>
<dbReference type="GO" id="GO:0043231">
    <property type="term" value="C:intracellular membrane-bounded organelle"/>
    <property type="evidence" value="ECO:0000314"/>
    <property type="project" value="UniProtKB"/>
</dbReference>
<dbReference type="GO" id="GO:0005811">
    <property type="term" value="C:lipid droplet"/>
    <property type="evidence" value="ECO:0000250"/>
    <property type="project" value="UniProtKB"/>
</dbReference>
<dbReference type="GO" id="GO:0047376">
    <property type="term" value="F:all-trans-retinyl-palmitate hydrolase, all-trans-retinol forming activity"/>
    <property type="evidence" value="ECO:0007669"/>
    <property type="project" value="RHEA"/>
</dbReference>
<dbReference type="GO" id="GO:0106435">
    <property type="term" value="F:carboxylesterase activity"/>
    <property type="evidence" value="ECO:0000266"/>
    <property type="project" value="RGD"/>
</dbReference>
<dbReference type="GO" id="GO:0052689">
    <property type="term" value="F:carboxylic ester hydrolase activity"/>
    <property type="evidence" value="ECO:0000266"/>
    <property type="project" value="RGD"/>
</dbReference>
<dbReference type="GO" id="GO:0030339">
    <property type="term" value="F:fatty-acyl-ethyl-ester synthase activity"/>
    <property type="evidence" value="ECO:0007669"/>
    <property type="project" value="UniProtKB-EC"/>
</dbReference>
<dbReference type="GO" id="GO:0050253">
    <property type="term" value="F:retinyl-palmitate esterase activity"/>
    <property type="evidence" value="ECO:0000314"/>
    <property type="project" value="UniProtKB"/>
</dbReference>
<dbReference type="GO" id="GO:0004771">
    <property type="term" value="F:sterol ester esterase activity"/>
    <property type="evidence" value="ECO:0000250"/>
    <property type="project" value="UniProtKB"/>
</dbReference>
<dbReference type="GO" id="GO:0004806">
    <property type="term" value="F:triacylglycerol lipase activity"/>
    <property type="evidence" value="ECO:0000250"/>
    <property type="project" value="UniProtKB"/>
</dbReference>
<dbReference type="GO" id="GO:0046464">
    <property type="term" value="P:acylglycerol catabolic process"/>
    <property type="evidence" value="ECO:0000250"/>
    <property type="project" value="UniProtKB"/>
</dbReference>
<dbReference type="GO" id="GO:0071397">
    <property type="term" value="P:cellular response to cholesterol"/>
    <property type="evidence" value="ECO:0000266"/>
    <property type="project" value="RGD"/>
</dbReference>
<dbReference type="GO" id="GO:0070417">
    <property type="term" value="P:cellular response to cold"/>
    <property type="evidence" value="ECO:0000266"/>
    <property type="project" value="RGD"/>
</dbReference>
<dbReference type="GO" id="GO:0071404">
    <property type="term" value="P:cellular response to low-density lipoprotein particle stimulus"/>
    <property type="evidence" value="ECO:0000266"/>
    <property type="project" value="RGD"/>
</dbReference>
<dbReference type="GO" id="GO:0006695">
    <property type="term" value="P:cholesterol biosynthetic process"/>
    <property type="evidence" value="ECO:0000266"/>
    <property type="project" value="RGD"/>
</dbReference>
<dbReference type="GO" id="GO:0042632">
    <property type="term" value="P:cholesterol homeostasis"/>
    <property type="evidence" value="ECO:0000266"/>
    <property type="project" value="RGD"/>
</dbReference>
<dbReference type="GO" id="GO:0008203">
    <property type="term" value="P:cholesterol metabolic process"/>
    <property type="evidence" value="ECO:0000266"/>
    <property type="project" value="RGD"/>
</dbReference>
<dbReference type="GO" id="GO:0060086">
    <property type="term" value="P:circadian temperature homeostasis"/>
    <property type="evidence" value="ECO:0000266"/>
    <property type="project" value="RGD"/>
</dbReference>
<dbReference type="GO" id="GO:0106106">
    <property type="term" value="P:cold-induced thermogenesis"/>
    <property type="evidence" value="ECO:0000266"/>
    <property type="project" value="RGD"/>
</dbReference>
<dbReference type="GO" id="GO:0061725">
    <property type="term" value="P:cytosolic lipolysis"/>
    <property type="evidence" value="ECO:0000266"/>
    <property type="project" value="RGD"/>
</dbReference>
<dbReference type="GO" id="GO:0030855">
    <property type="term" value="P:epithelial cell differentiation"/>
    <property type="evidence" value="ECO:0000266"/>
    <property type="project" value="RGD"/>
</dbReference>
<dbReference type="GO" id="GO:0016042">
    <property type="term" value="P:lipid catabolic process"/>
    <property type="evidence" value="ECO:0000266"/>
    <property type="project" value="RGD"/>
</dbReference>
<dbReference type="GO" id="GO:0051791">
    <property type="term" value="P:medium-chain fatty acid metabolic process"/>
    <property type="evidence" value="ECO:0000266"/>
    <property type="project" value="RGD"/>
</dbReference>
<dbReference type="GO" id="GO:0010887">
    <property type="term" value="P:negative regulation of cholesterol storage"/>
    <property type="evidence" value="ECO:0000266"/>
    <property type="project" value="RGD"/>
</dbReference>
<dbReference type="GO" id="GO:0010875">
    <property type="term" value="P:positive regulation of cholesterol efflux"/>
    <property type="evidence" value="ECO:0000266"/>
    <property type="project" value="RGD"/>
</dbReference>
<dbReference type="GO" id="GO:0090205">
    <property type="term" value="P:positive regulation of cholesterol metabolic process"/>
    <property type="evidence" value="ECO:0000266"/>
    <property type="project" value="RGD"/>
</dbReference>
<dbReference type="GO" id="GO:0045944">
    <property type="term" value="P:positive regulation of transcription by RNA polymerase II"/>
    <property type="evidence" value="ECO:0000266"/>
    <property type="project" value="RGD"/>
</dbReference>
<dbReference type="GO" id="GO:0070857">
    <property type="term" value="P:regulation of bile acid biosynthetic process"/>
    <property type="evidence" value="ECO:0000266"/>
    <property type="project" value="RGD"/>
</dbReference>
<dbReference type="GO" id="GO:0120188">
    <property type="term" value="P:regulation of bile acid secretion"/>
    <property type="evidence" value="ECO:0000266"/>
    <property type="project" value="RGD"/>
</dbReference>
<dbReference type="GO" id="GO:0001523">
    <property type="term" value="P:retinoid metabolic process"/>
    <property type="evidence" value="ECO:0000304"/>
    <property type="project" value="UniProtKB"/>
</dbReference>
<dbReference type="GO" id="GO:0043691">
    <property type="term" value="P:reverse cholesterol transport"/>
    <property type="evidence" value="ECO:0000266"/>
    <property type="project" value="RGD"/>
</dbReference>
<dbReference type="GO" id="GO:0019626">
    <property type="term" value="P:short-chain fatty acid catabolic process"/>
    <property type="evidence" value="ECO:0000266"/>
    <property type="project" value="RGD"/>
</dbReference>
<dbReference type="GO" id="GO:0034379">
    <property type="term" value="P:very-low-density lipoprotein particle assembly"/>
    <property type="evidence" value="ECO:0000266"/>
    <property type="project" value="RGD"/>
</dbReference>
<dbReference type="CDD" id="cd00312">
    <property type="entry name" value="Esterase_lipase"/>
    <property type="match status" value="1"/>
</dbReference>
<dbReference type="FunFam" id="3.40.50.1820:FF:000011">
    <property type="entry name" value="Carboxylic ester hydrolase"/>
    <property type="match status" value="1"/>
</dbReference>
<dbReference type="Gene3D" id="3.40.50.1820">
    <property type="entry name" value="alpha/beta hydrolase"/>
    <property type="match status" value="1"/>
</dbReference>
<dbReference type="InterPro" id="IPR029058">
    <property type="entry name" value="AB_hydrolase_fold"/>
</dbReference>
<dbReference type="InterPro" id="IPR002018">
    <property type="entry name" value="CarbesteraseB"/>
</dbReference>
<dbReference type="InterPro" id="IPR019826">
    <property type="entry name" value="Carboxylesterase_B_AS"/>
</dbReference>
<dbReference type="InterPro" id="IPR019819">
    <property type="entry name" value="Carboxylesterase_B_CS"/>
</dbReference>
<dbReference type="InterPro" id="IPR050309">
    <property type="entry name" value="Type-B_Carboxylest/Lipase"/>
</dbReference>
<dbReference type="PANTHER" id="PTHR11559">
    <property type="entry name" value="CARBOXYLESTERASE"/>
    <property type="match status" value="1"/>
</dbReference>
<dbReference type="Pfam" id="PF00135">
    <property type="entry name" value="COesterase"/>
    <property type="match status" value="1"/>
</dbReference>
<dbReference type="SUPFAM" id="SSF53474">
    <property type="entry name" value="alpha/beta-Hydrolases"/>
    <property type="match status" value="1"/>
</dbReference>
<dbReference type="PROSITE" id="PS00122">
    <property type="entry name" value="CARBOXYLESTERASE_B_1"/>
    <property type="match status" value="1"/>
</dbReference>
<dbReference type="PROSITE" id="PS00941">
    <property type="entry name" value="CARBOXYLESTERASE_B_2"/>
    <property type="match status" value="1"/>
</dbReference>
<protein>
    <recommendedName>
        <fullName evidence="11">Carboxylesterase 1D</fullName>
    </recommendedName>
    <alternativeName>
        <fullName evidence="10">Carboxyesterase ES-10</fullName>
    </alternativeName>
    <alternativeName>
        <fullName>Carboxylesterase 3</fullName>
        <ecNumber>3.1.1.1</ecNumber>
        <ecNumber>3.1.1.67</ecNumber>
    </alternativeName>
    <alternativeName>
        <fullName>ES-HVEL</fullName>
    </alternativeName>
    <alternativeName>
        <fullName>Fatty acid ethyl ester synthase</fullName>
        <shortName>FAEE synthase</shortName>
    </alternativeName>
    <alternativeName>
        <fullName>Liver carboxylesterase 10</fullName>
    </alternativeName>
    <alternativeName>
        <fullName>pI 6.1 esterase</fullName>
    </alternativeName>
</protein>
<reference key="1">
    <citation type="journal article" date="1990" name="Biochem. J.">
        <title>Nucleotide sequence of cDNA coding for rat liver pI 6.1 esterase (ES-10), a carboxylesterase located in the lumen of the endoplasmic reticulum.</title>
        <authorList>
            <person name="Robbi M."/>
            <person name="Beaufay H."/>
            <person name="Octave J.-N."/>
        </authorList>
    </citation>
    <scope>NUCLEOTIDE SEQUENCE [MRNA]</scope>
    <source>
        <strain>Sprague-Dawley</strain>
        <strain>Wistar</strain>
        <tissue>Liver</tissue>
    </source>
</reference>
<reference key="2">
    <citation type="journal article" date="1992" name="Eur. J. Biochem.">
        <title>The carboxylesterase family exhibits C-terminal sequence diversity reflecting the presence or absence of endoplasmic-reticulum-retention sequences.</title>
        <authorList>
            <person name="Medda S."/>
            <person name="Proia R.L."/>
        </authorList>
    </citation>
    <scope>NUCLEOTIDE SEQUENCE [MRNA]</scope>
    <source>
        <strain>Sprague-Dawley</strain>
        <tissue>Liver</tissue>
    </source>
</reference>
<reference key="3">
    <citation type="journal article" date="1995" name="Biochim. Biophys. Acta">
        <title>Molecular cloning and expression of rat hepatic neutral cholesteryl ester hydrolase.</title>
        <authorList>
            <person name="Ghosh S."/>
            <person name="Mallonee D.H."/>
            <person name="Hylemon P.B."/>
            <person name="Grogan W.M."/>
        </authorList>
    </citation>
    <scope>NUCLEOTIDE SEQUENCE [MRNA]</scope>
    <source>
        <strain>Sprague-Dawley</strain>
        <tissue>Liver</tissue>
    </source>
</reference>
<reference key="4">
    <citation type="journal article" date="2001" name="J. Biol. Chem.">
        <title>Mutation of residues 423 (Met/Ile), 444 (Thr/Met), and 506 (Asn/Ser) confer cholesteryl esterase activity on rat lung carboxylesterase. Ser-506 is required for activation by cAMP-dependent protein kinase.</title>
        <authorList>
            <person name="Wallace T.J."/>
            <person name="Kodsi E.M."/>
            <person name="Langston T.B."/>
            <person name="Gergis M.R."/>
            <person name="Grogan W.M."/>
        </authorList>
    </citation>
    <scope>NUCLEOTIDE SEQUENCE [MRNA]</scope>
    <scope>MUTAGENESIS OF GLN-186; MET-423; SER-491; LYS-492 AND ASN-506</scope>
    <source>
        <strain>Sprague-Dawley</strain>
        <tissue>Lung</tissue>
    </source>
</reference>
<reference key="5">
    <citation type="submission" date="1999-07" db="EMBL/GenBank/DDBJ databases">
        <title>Rattus norvegicus adipocyte carboxylesterase mRNA.</title>
        <authorList>
            <person name="Ryu J.W."/>
            <person name="Lee W."/>
            <person name="Jung C.Y."/>
        </authorList>
    </citation>
    <scope>NUCLEOTIDE SEQUENCE [MRNA]</scope>
    <source>
        <strain>Sprague-Dawley</strain>
    </source>
</reference>
<reference key="6">
    <citation type="journal article" date="2004" name="Genome Res.">
        <title>The status, quality, and expansion of the NIH full-length cDNA project: the Mammalian Gene Collection (MGC).</title>
        <authorList>
            <consortium name="The MGC Project Team"/>
        </authorList>
    </citation>
    <scope>NUCLEOTIDE SEQUENCE [LARGE SCALE MRNA]</scope>
    <source>
        <tissue>Prostate</tissue>
    </source>
</reference>
<reference key="7">
    <citation type="journal article" date="1992" name="J. Biol. Chem.">
        <title>Fatty acid ethyl ester synthase in rat adipose tissue and its relationship to carboxylesterase.</title>
        <authorList>
            <person name="Tsujita T."/>
            <person name="Okuda H."/>
        </authorList>
    </citation>
    <scope>PROTEIN SEQUENCE OF 19-45</scope>
    <scope>FUNCTION</scope>
    <scope>CATALYTIC ACTIVITY</scope>
    <scope>ACTIVITY REGULATION</scope>
    <scope>BIOPHYSICOCHEMICAL PROPERTIES</scope>
    <scope>TISSUE SPECIFICITY</scope>
    <source>
        <strain>Wistar</strain>
        <tissue>Adipose tissue</tissue>
    </source>
</reference>
<reference key="8">
    <citation type="journal article" date="1995" name="Toxicol. Lett.">
        <title>Molecular aspects of carboxylesterase isoforms in comparison with other esterases.</title>
        <authorList>
            <person name="Satoh T."/>
            <person name="Hosokawa M."/>
        </authorList>
    </citation>
    <scope>PROTEIN SEQUENCE OF 19-38</scope>
    <scope>NUCLEOTIDE SEQUENCE [MRNA] OF 113-121; 138-149; 216-224; 350-356 AND 464-469</scope>
    <scope>SUBUNIT</scope>
    <source>
        <tissue>Liver</tissue>
    </source>
</reference>
<reference key="9">
    <citation type="journal article" date="2002" name="Eur. J. Biochem.">
        <title>Identification of microsomal rat liver carboxylesterases and their activity with retinyl palmitate.</title>
        <authorList>
            <person name="Sanghani S.P."/>
            <person name="Davis W.I."/>
            <person name="Dumaual N.G."/>
            <person name="Mahrenholz A."/>
            <person name="Bosron W.F."/>
        </authorList>
    </citation>
    <scope>CATALYTIC ACTIVITY</scope>
    <scope>FUNCTION</scope>
    <scope>SUBCELLULAR LOCATION</scope>
    <scope>TISSUE SPECIFICITY</scope>
    <scope>BIOPHYSICOCHEMICAL PROPERTIES</scope>
</reference>